<dbReference type="EC" id="1.14.-.-"/>
<dbReference type="EMBL" id="LT708304">
    <property type="protein sequence ID" value="SIT99388.1"/>
    <property type="molecule type" value="Genomic_DNA"/>
</dbReference>
<dbReference type="RefSeq" id="NP_854447.1">
    <property type="nucleotide sequence ID" value="NC_002945.3"/>
</dbReference>
<dbReference type="RefSeq" id="WP_003403911.1">
    <property type="nucleotide sequence ID" value="NC_002945.4"/>
</dbReference>
<dbReference type="SMR" id="P63708"/>
<dbReference type="KEGG" id="mbo:BQ2027_MB0789C"/>
<dbReference type="PATRIC" id="fig|233413.5.peg.859"/>
<dbReference type="Proteomes" id="UP000001419">
    <property type="component" value="Chromosome"/>
</dbReference>
<dbReference type="GO" id="GO:0036199">
    <property type="term" value="F:cholest-4-en-3-one 26-monooxygenase activity"/>
    <property type="evidence" value="ECO:0007669"/>
    <property type="project" value="TreeGrafter"/>
</dbReference>
<dbReference type="GO" id="GO:0020037">
    <property type="term" value="F:heme binding"/>
    <property type="evidence" value="ECO:0007669"/>
    <property type="project" value="InterPro"/>
</dbReference>
<dbReference type="GO" id="GO:0005506">
    <property type="term" value="F:iron ion binding"/>
    <property type="evidence" value="ECO:0007669"/>
    <property type="project" value="InterPro"/>
</dbReference>
<dbReference type="GO" id="GO:0008395">
    <property type="term" value="F:steroid hydroxylase activity"/>
    <property type="evidence" value="ECO:0007669"/>
    <property type="project" value="TreeGrafter"/>
</dbReference>
<dbReference type="GO" id="GO:0006707">
    <property type="term" value="P:cholesterol catabolic process"/>
    <property type="evidence" value="ECO:0007669"/>
    <property type="project" value="TreeGrafter"/>
</dbReference>
<dbReference type="CDD" id="cd11078">
    <property type="entry name" value="CYP130-like"/>
    <property type="match status" value="1"/>
</dbReference>
<dbReference type="FunFam" id="1.10.630.10:FF:000018">
    <property type="entry name" value="Cytochrome P450 monooxygenase"/>
    <property type="match status" value="1"/>
</dbReference>
<dbReference type="Gene3D" id="1.10.630.10">
    <property type="entry name" value="Cytochrome P450"/>
    <property type="match status" value="1"/>
</dbReference>
<dbReference type="InterPro" id="IPR001128">
    <property type="entry name" value="Cyt_P450"/>
</dbReference>
<dbReference type="InterPro" id="IPR002397">
    <property type="entry name" value="Cyt_P450_B"/>
</dbReference>
<dbReference type="InterPro" id="IPR017972">
    <property type="entry name" value="Cyt_P450_CS"/>
</dbReference>
<dbReference type="InterPro" id="IPR036396">
    <property type="entry name" value="Cyt_P450_sf"/>
</dbReference>
<dbReference type="PANTHER" id="PTHR46696:SF4">
    <property type="entry name" value="BIOTIN BIOSYNTHESIS CYTOCHROME P450"/>
    <property type="match status" value="1"/>
</dbReference>
<dbReference type="PANTHER" id="PTHR46696">
    <property type="entry name" value="P450, PUTATIVE (EUROFUNG)-RELATED"/>
    <property type="match status" value="1"/>
</dbReference>
<dbReference type="Pfam" id="PF00067">
    <property type="entry name" value="p450"/>
    <property type="match status" value="1"/>
</dbReference>
<dbReference type="PRINTS" id="PR00359">
    <property type="entry name" value="BP450"/>
</dbReference>
<dbReference type="PRINTS" id="PR00385">
    <property type="entry name" value="P450"/>
</dbReference>
<dbReference type="SUPFAM" id="SSF48264">
    <property type="entry name" value="Cytochrome P450"/>
    <property type="match status" value="1"/>
</dbReference>
<dbReference type="PROSITE" id="PS00086">
    <property type="entry name" value="CYTOCHROME_P450"/>
    <property type="match status" value="1"/>
</dbReference>
<name>CP123_MYCBO</name>
<organism>
    <name type="scientific">Mycobacterium bovis (strain ATCC BAA-935 / AF2122/97)</name>
    <dbReference type="NCBI Taxonomy" id="233413"/>
    <lineage>
        <taxon>Bacteria</taxon>
        <taxon>Bacillati</taxon>
        <taxon>Actinomycetota</taxon>
        <taxon>Actinomycetes</taxon>
        <taxon>Mycobacteriales</taxon>
        <taxon>Mycobacteriaceae</taxon>
        <taxon>Mycobacterium</taxon>
        <taxon>Mycobacterium tuberculosis complex</taxon>
    </lineage>
</organism>
<reference key="1">
    <citation type="journal article" date="2003" name="Proc. Natl. Acad. Sci. U.S.A.">
        <title>The complete genome sequence of Mycobacterium bovis.</title>
        <authorList>
            <person name="Garnier T."/>
            <person name="Eiglmeier K."/>
            <person name="Camus J.-C."/>
            <person name="Medina N."/>
            <person name="Mansoor H."/>
            <person name="Pryor M."/>
            <person name="Duthoy S."/>
            <person name="Grondin S."/>
            <person name="Lacroix C."/>
            <person name="Monsempe C."/>
            <person name="Simon S."/>
            <person name="Harris B."/>
            <person name="Atkin R."/>
            <person name="Doggett J."/>
            <person name="Mayes R."/>
            <person name="Keating L."/>
            <person name="Wheeler P.R."/>
            <person name="Parkhill J."/>
            <person name="Barrell B.G."/>
            <person name="Cole S.T."/>
            <person name="Gordon S.V."/>
            <person name="Hewinson R.G."/>
        </authorList>
    </citation>
    <scope>NUCLEOTIDE SEQUENCE [LARGE SCALE GENOMIC DNA]</scope>
    <source>
        <strain>ATCC BAA-935 / AF2122/97</strain>
    </source>
</reference>
<reference key="2">
    <citation type="journal article" date="2017" name="Genome Announc.">
        <title>Updated reference genome sequence and annotation of Mycobacterium bovis AF2122/97.</title>
        <authorList>
            <person name="Malone K.M."/>
            <person name="Farrell D."/>
            <person name="Stuber T.P."/>
            <person name="Schubert O.T."/>
            <person name="Aebersold R."/>
            <person name="Robbe-Austerman S."/>
            <person name="Gordon S.V."/>
        </authorList>
    </citation>
    <scope>NUCLEOTIDE SEQUENCE [LARGE SCALE GENOMIC DNA]</scope>
    <scope>GENOME REANNOTATION</scope>
    <source>
        <strain>ATCC BAA-935 / AF2122/97</strain>
    </source>
</reference>
<sequence>MTVRVGDPELVLDPYDYDFHEDPYPYYRRLRDEAPLYRNEERNFWAVSRHHDVLQGFRDSTALSNAYGVSLDPSSRTSEAYRVMSMLAMDDPAHLRMRTLVSKGFTPRRIRELEPQVLELARIHLDSALQTESFDFVAEFAGKLPMDVISELIGVPDTDRARIRALADAVLHREDGVADVPPPAMAASIELMRYYADLIAEFRRRPANNLTSALLAAELDGDRLSDQEIMAFLFLMVIAGNETTTKLLANAVYWAAHHPGQLARVFADHSRIPMWVEETLRYDTSSQILARTVAHDLTLYDTTIPEGEVLLLLPGSANRDDRVFDDPDDYRIGREIGCKLVSFGSGAHFCLGAHLARMEARVALGALLRRIRNYEVDDDNVVRVHSSNVRGFAHLPISVQAR</sequence>
<accession>P63708</accession>
<accession>A0A1R3XWB6</accession>
<accession>P77902</accession>
<accession>X2BG36</accession>
<keyword id="KW-0349">Heme</keyword>
<keyword id="KW-0408">Iron</keyword>
<keyword id="KW-0479">Metal-binding</keyword>
<keyword id="KW-0503">Monooxygenase</keyword>
<keyword id="KW-0560">Oxidoreductase</keyword>
<keyword id="KW-1185">Reference proteome</keyword>
<protein>
    <recommendedName>
        <fullName>Putative cytochrome P450 123</fullName>
        <ecNumber>1.14.-.-</ecNumber>
    </recommendedName>
</protein>
<gene>
    <name type="primary">cyp123</name>
    <name type="ordered locus">BQ2027_MB0789C</name>
</gene>
<proteinExistence type="inferred from homology"/>
<feature type="chain" id="PRO_0000052275" description="Putative cytochrome P450 123">
    <location>
        <begin position="1"/>
        <end position="402"/>
    </location>
</feature>
<feature type="binding site" description="axial binding residue" evidence="1">
    <location>
        <position position="350"/>
    </location>
    <ligand>
        <name>heme</name>
        <dbReference type="ChEBI" id="CHEBI:30413"/>
    </ligand>
    <ligandPart>
        <name>Fe</name>
        <dbReference type="ChEBI" id="CHEBI:18248"/>
    </ligandPart>
</feature>
<evidence type="ECO:0000250" key="1"/>
<evidence type="ECO:0000305" key="2"/>
<comment type="cofactor">
    <cofactor evidence="1">
        <name>heme</name>
        <dbReference type="ChEBI" id="CHEBI:30413"/>
    </cofactor>
</comment>
<comment type="similarity">
    <text evidence="2">Belongs to the cytochrome P450 family.</text>
</comment>